<evidence type="ECO:0000250" key="1"/>
<evidence type="ECO:0000256" key="2">
    <source>
        <dbReference type="SAM" id="MobiDB-lite"/>
    </source>
</evidence>
<evidence type="ECO:0000269" key="3">
    <source>
    </source>
</evidence>
<evidence type="ECO:0000305" key="4"/>
<comment type="function">
    <text evidence="1">Variant histone H2A which may replace conventional H2A in a subset of nucleosomes. Nucleosomes wrap and compact DNA into chromatin, limiting DNA accessibility to the cellular machineries which require DNA as a template. Histones thereby play a central role in transcription regulation, DNA repair, DNA replication and chromosomal stability. DNA accessibility is regulated via a complex set of post-translational modifications of histones, also called histone code, and nucleosome remodeling (By similarity).</text>
</comment>
<comment type="subunit">
    <text>The nucleosome is a histone octamer containing two molecules each of H2A, H2B, H3 and H4 assembled in one H3-H4 heterotetramer and two H2A-H2B heterodimers. The octamer wraps approximately 147 bp of DNA.</text>
</comment>
<comment type="interaction">
    <interactant intactId="EBI-1537433">
        <id>O23628</id>
    </interactant>
    <interactant intactId="EBI-1537394">
        <id>F4IP06</id>
        <label>SWC2</label>
    </interactant>
    <organismsDiffer>false</organismsDiffer>
    <experiments>3</experiments>
</comment>
<comment type="subcellular location">
    <subcellularLocation>
        <location evidence="1">Nucleus</location>
    </subcellularLocation>
    <subcellularLocation>
        <location evidence="1">Chromosome</location>
    </subcellularLocation>
</comment>
<comment type="induction">
    <text evidence="3">Restricted to actively growing cells. Peak of accumulation in the G1/S boundary and in the S phase.</text>
</comment>
<comment type="similarity">
    <text evidence="4">Belongs to the histone H2A family.</text>
</comment>
<sequence length="136" mass="14541">MAGKGGKGLVAAKTMAANKDKDKDKKKPISRSARAGIQFPVGRIHRQLKTRVSAHGRVGATAAVYTASILEYLTAEVLELAGNASKDLKVKRITPRHLQLAIRGDEELDTLIKGTIAGGGVIPHIHKSLINKTTKE</sequence>
<reference key="1">
    <citation type="journal article" date="1997" name="Plant Physiol.">
        <title>Identification of proliferation-induced genes in Arabidopsis thaliana. Characterization of a new member of the highly evolutionarily conserved histone H2A.F/Z variant subfamily.</title>
        <authorList>
            <person name="Callard D."/>
            <person name="Mazzolini L."/>
        </authorList>
    </citation>
    <scope>NUCLEOTIDE SEQUENCE [MRNA]</scope>
    <scope>INDUCTION</scope>
</reference>
<reference key="2">
    <citation type="journal article" date="2000" name="Nature">
        <title>Sequence and analysis of chromosome 3 of the plant Arabidopsis thaliana.</title>
        <authorList>
            <person name="Salanoubat M."/>
            <person name="Lemcke K."/>
            <person name="Rieger M."/>
            <person name="Ansorge W."/>
            <person name="Unseld M."/>
            <person name="Fartmann B."/>
            <person name="Valle G."/>
            <person name="Bloecker H."/>
            <person name="Perez-Alonso M."/>
            <person name="Obermaier B."/>
            <person name="Delseny M."/>
            <person name="Boutry M."/>
            <person name="Grivell L.A."/>
            <person name="Mache R."/>
            <person name="Puigdomenech P."/>
            <person name="De Simone V."/>
            <person name="Choisne N."/>
            <person name="Artiguenave F."/>
            <person name="Robert C."/>
            <person name="Brottier P."/>
            <person name="Wincker P."/>
            <person name="Cattolico L."/>
            <person name="Weissenbach J."/>
            <person name="Saurin W."/>
            <person name="Quetier F."/>
            <person name="Schaefer M."/>
            <person name="Mueller-Auer S."/>
            <person name="Gabel C."/>
            <person name="Fuchs M."/>
            <person name="Benes V."/>
            <person name="Wurmbach E."/>
            <person name="Drzonek H."/>
            <person name="Erfle H."/>
            <person name="Jordan N."/>
            <person name="Bangert S."/>
            <person name="Wiedelmann R."/>
            <person name="Kranz H."/>
            <person name="Voss H."/>
            <person name="Holland R."/>
            <person name="Brandt P."/>
            <person name="Nyakatura G."/>
            <person name="Vezzi A."/>
            <person name="D'Angelo M."/>
            <person name="Pallavicini A."/>
            <person name="Toppo S."/>
            <person name="Simionati B."/>
            <person name="Conrad A."/>
            <person name="Hornischer K."/>
            <person name="Kauer G."/>
            <person name="Loehnert T.-H."/>
            <person name="Nordsiek G."/>
            <person name="Reichelt J."/>
            <person name="Scharfe M."/>
            <person name="Schoen O."/>
            <person name="Bargues M."/>
            <person name="Terol J."/>
            <person name="Climent J."/>
            <person name="Navarro P."/>
            <person name="Collado C."/>
            <person name="Perez-Perez A."/>
            <person name="Ottenwaelder B."/>
            <person name="Duchemin D."/>
            <person name="Cooke R."/>
            <person name="Laudie M."/>
            <person name="Berger-Llauro C."/>
            <person name="Purnelle B."/>
            <person name="Masuy D."/>
            <person name="de Haan M."/>
            <person name="Maarse A.C."/>
            <person name="Alcaraz J.-P."/>
            <person name="Cottet A."/>
            <person name="Casacuberta E."/>
            <person name="Monfort A."/>
            <person name="Argiriou A."/>
            <person name="Flores M."/>
            <person name="Liguori R."/>
            <person name="Vitale D."/>
            <person name="Mannhaupt G."/>
            <person name="Haase D."/>
            <person name="Schoof H."/>
            <person name="Rudd S."/>
            <person name="Zaccaria P."/>
            <person name="Mewes H.-W."/>
            <person name="Mayer K.F.X."/>
            <person name="Kaul S."/>
            <person name="Town C.D."/>
            <person name="Koo H.L."/>
            <person name="Tallon L.J."/>
            <person name="Jenkins J."/>
            <person name="Rooney T."/>
            <person name="Rizzo M."/>
            <person name="Walts A."/>
            <person name="Utterback T."/>
            <person name="Fujii C.Y."/>
            <person name="Shea T.P."/>
            <person name="Creasy T.H."/>
            <person name="Haas B."/>
            <person name="Maiti R."/>
            <person name="Wu D."/>
            <person name="Peterson J."/>
            <person name="Van Aken S."/>
            <person name="Pai G."/>
            <person name="Militscher J."/>
            <person name="Sellers P."/>
            <person name="Gill J.E."/>
            <person name="Feldblyum T.V."/>
            <person name="Preuss D."/>
            <person name="Lin X."/>
            <person name="Nierman W.C."/>
            <person name="Salzberg S.L."/>
            <person name="White O."/>
            <person name="Venter J.C."/>
            <person name="Fraser C.M."/>
            <person name="Kaneko T."/>
            <person name="Nakamura Y."/>
            <person name="Sato S."/>
            <person name="Kato T."/>
            <person name="Asamizu E."/>
            <person name="Sasamoto S."/>
            <person name="Kimura T."/>
            <person name="Idesawa K."/>
            <person name="Kawashima K."/>
            <person name="Kishida Y."/>
            <person name="Kiyokawa C."/>
            <person name="Kohara M."/>
            <person name="Matsumoto M."/>
            <person name="Matsuno A."/>
            <person name="Muraki A."/>
            <person name="Nakayama S."/>
            <person name="Nakazaki N."/>
            <person name="Shinpo S."/>
            <person name="Takeuchi C."/>
            <person name="Wada T."/>
            <person name="Watanabe A."/>
            <person name="Yamada M."/>
            <person name="Yasuda M."/>
            <person name="Tabata S."/>
        </authorList>
    </citation>
    <scope>NUCLEOTIDE SEQUENCE [LARGE SCALE GENOMIC DNA]</scope>
    <source>
        <strain>cv. Columbia</strain>
    </source>
</reference>
<reference key="3">
    <citation type="journal article" date="2017" name="Plant J.">
        <title>Araport11: a complete reannotation of the Arabidopsis thaliana reference genome.</title>
        <authorList>
            <person name="Cheng C.Y."/>
            <person name="Krishnakumar V."/>
            <person name="Chan A.P."/>
            <person name="Thibaud-Nissen F."/>
            <person name="Schobel S."/>
            <person name="Town C.D."/>
        </authorList>
    </citation>
    <scope>GENOME REANNOTATION</scope>
    <source>
        <strain>cv. Columbia</strain>
    </source>
</reference>
<reference key="4">
    <citation type="journal article" date="2003" name="Science">
        <title>Empirical analysis of transcriptional activity in the Arabidopsis genome.</title>
        <authorList>
            <person name="Yamada K."/>
            <person name="Lim J."/>
            <person name="Dale J.M."/>
            <person name="Chen H."/>
            <person name="Shinn P."/>
            <person name="Palm C.J."/>
            <person name="Southwick A.M."/>
            <person name="Wu H.C."/>
            <person name="Kim C.J."/>
            <person name="Nguyen M."/>
            <person name="Pham P.K."/>
            <person name="Cheuk R.F."/>
            <person name="Karlin-Newmann G."/>
            <person name="Liu S.X."/>
            <person name="Lam B."/>
            <person name="Sakano H."/>
            <person name="Wu T."/>
            <person name="Yu G."/>
            <person name="Miranda M."/>
            <person name="Quach H.L."/>
            <person name="Tripp M."/>
            <person name="Chang C.H."/>
            <person name="Lee J.M."/>
            <person name="Toriumi M.J."/>
            <person name="Chan M.M."/>
            <person name="Tang C.C."/>
            <person name="Onodera C.S."/>
            <person name="Deng J.M."/>
            <person name="Akiyama K."/>
            <person name="Ansari Y."/>
            <person name="Arakawa T."/>
            <person name="Banh J."/>
            <person name="Banno F."/>
            <person name="Bowser L."/>
            <person name="Brooks S.Y."/>
            <person name="Carninci P."/>
            <person name="Chao Q."/>
            <person name="Choy N."/>
            <person name="Enju A."/>
            <person name="Goldsmith A.D."/>
            <person name="Gurjal M."/>
            <person name="Hansen N.F."/>
            <person name="Hayashizaki Y."/>
            <person name="Johnson-Hopson C."/>
            <person name="Hsuan V.W."/>
            <person name="Iida K."/>
            <person name="Karnes M."/>
            <person name="Khan S."/>
            <person name="Koesema E."/>
            <person name="Ishida J."/>
            <person name="Jiang P.X."/>
            <person name="Jones T."/>
            <person name="Kawai J."/>
            <person name="Kamiya A."/>
            <person name="Meyers C."/>
            <person name="Nakajima M."/>
            <person name="Narusaka M."/>
            <person name="Seki M."/>
            <person name="Sakurai T."/>
            <person name="Satou M."/>
            <person name="Tamse R."/>
            <person name="Vaysberg M."/>
            <person name="Wallender E.K."/>
            <person name="Wong C."/>
            <person name="Yamamura Y."/>
            <person name="Yuan S."/>
            <person name="Shinozaki K."/>
            <person name="Davis R.W."/>
            <person name="Theologis A."/>
            <person name="Ecker J.R."/>
        </authorList>
    </citation>
    <scope>NUCLEOTIDE SEQUENCE [LARGE SCALE MRNA]</scope>
    <source>
        <strain>cv. Columbia</strain>
    </source>
</reference>
<reference key="5">
    <citation type="submission" date="2002-03" db="EMBL/GenBank/DDBJ databases">
        <title>Full-length cDNA from Arabidopsis thaliana.</title>
        <authorList>
            <person name="Brover V.V."/>
            <person name="Troukhan M.E."/>
            <person name="Alexandrov N.A."/>
            <person name="Lu Y.-P."/>
            <person name="Flavell R.B."/>
            <person name="Feldmann K.A."/>
        </authorList>
    </citation>
    <scope>NUCLEOTIDE SEQUENCE [LARGE SCALE MRNA]</scope>
</reference>
<reference key="6">
    <citation type="journal article" date="2006" name="Plant Cell">
        <title>Constitutive expression exposes functional redundancy between the Arabidopsis histone H2A gene HTA1 and other H2A gene family members.</title>
        <authorList>
            <person name="Yi H."/>
            <person name="Sardesai N."/>
            <person name="Fujinuma T."/>
            <person name="Chan C.-W."/>
            <person name="Veena X."/>
            <person name="Gelvin S.B."/>
        </authorList>
    </citation>
    <scope>NOMENCLATURE</scope>
</reference>
<gene>
    <name type="primary">H2AV</name>
    <name type="ordered locus">At3g54560</name>
    <name type="ORF">T14E10.130</name>
</gene>
<dbReference type="EMBL" id="Y12575">
    <property type="protein sequence ID" value="CAA73155.1"/>
    <property type="molecule type" value="mRNA"/>
</dbReference>
<dbReference type="EMBL" id="AL138656">
    <property type="protein sequence ID" value="CAB77576.1"/>
    <property type="molecule type" value="Genomic_DNA"/>
</dbReference>
<dbReference type="EMBL" id="CP002686">
    <property type="protein sequence ID" value="AEE79250.1"/>
    <property type="molecule type" value="Genomic_DNA"/>
</dbReference>
<dbReference type="EMBL" id="CP002686">
    <property type="protein sequence ID" value="ANM63607.1"/>
    <property type="molecule type" value="Genomic_DNA"/>
</dbReference>
<dbReference type="EMBL" id="BT005205">
    <property type="protein sequence ID" value="AAO63269.1"/>
    <property type="molecule type" value="mRNA"/>
</dbReference>
<dbReference type="EMBL" id="AY087232">
    <property type="protein sequence ID" value="AAM64788.1"/>
    <property type="molecule type" value="mRNA"/>
</dbReference>
<dbReference type="PIR" id="T47615">
    <property type="entry name" value="T47615"/>
</dbReference>
<dbReference type="SMR" id="O23628"/>
<dbReference type="BioGRID" id="9937">
    <property type="interactions" value="1"/>
</dbReference>
<dbReference type="FunCoup" id="O23628">
    <property type="interactions" value="3499"/>
</dbReference>
<dbReference type="IntAct" id="O23628">
    <property type="interactions" value="2"/>
</dbReference>
<dbReference type="STRING" id="3702.O23628"/>
<dbReference type="PaxDb" id="3702-AT3G54560.1"/>
<dbReference type="EnsemblPlants" id="AT3G54560.1">
    <property type="protein sequence ID" value="AT3G54560.1"/>
    <property type="gene ID" value="AT3G54560"/>
</dbReference>
<dbReference type="EnsemblPlants" id="AT3G54560.2">
    <property type="protein sequence ID" value="AT3G54560.2"/>
    <property type="gene ID" value="AT3G54560"/>
</dbReference>
<dbReference type="Gramene" id="AT3G54560.1">
    <property type="protein sequence ID" value="AT3G54560.1"/>
    <property type="gene ID" value="AT3G54560"/>
</dbReference>
<dbReference type="Gramene" id="AT3G54560.2">
    <property type="protein sequence ID" value="AT3G54560.2"/>
    <property type="gene ID" value="AT3G54560"/>
</dbReference>
<dbReference type="KEGG" id="ath:AT3G54560"/>
<dbReference type="Araport" id="AT3G54560"/>
<dbReference type="TAIR" id="AT3G54560">
    <property type="gene designation" value="HTA11"/>
</dbReference>
<dbReference type="eggNOG" id="KOG1757">
    <property type="taxonomic scope" value="Eukaryota"/>
</dbReference>
<dbReference type="HOGENOM" id="CLU_062828_2_4_1"/>
<dbReference type="InParanoid" id="O23628"/>
<dbReference type="OMA" id="MNKKGAP"/>
<dbReference type="OrthoDB" id="9421954at2759"/>
<dbReference type="PhylomeDB" id="O23628"/>
<dbReference type="PRO" id="PR:O23628"/>
<dbReference type="Proteomes" id="UP000006548">
    <property type="component" value="Chromosome 3"/>
</dbReference>
<dbReference type="ExpressionAtlas" id="O23628">
    <property type="expression patterns" value="baseline and differential"/>
</dbReference>
<dbReference type="GO" id="GO:0000786">
    <property type="term" value="C:nucleosome"/>
    <property type="evidence" value="ECO:0007669"/>
    <property type="project" value="UniProtKB-KW"/>
</dbReference>
<dbReference type="GO" id="GO:0005634">
    <property type="term" value="C:nucleus"/>
    <property type="evidence" value="ECO:0007669"/>
    <property type="project" value="UniProtKB-SubCell"/>
</dbReference>
<dbReference type="GO" id="GO:0003677">
    <property type="term" value="F:DNA binding"/>
    <property type="evidence" value="ECO:0007669"/>
    <property type="project" value="UniProtKB-KW"/>
</dbReference>
<dbReference type="GO" id="GO:0046982">
    <property type="term" value="F:protein heterodimerization activity"/>
    <property type="evidence" value="ECO:0007669"/>
    <property type="project" value="InterPro"/>
</dbReference>
<dbReference type="GO" id="GO:0030527">
    <property type="term" value="F:structural constituent of chromatin"/>
    <property type="evidence" value="ECO:0007669"/>
    <property type="project" value="InterPro"/>
</dbReference>
<dbReference type="GO" id="GO:0016048">
    <property type="term" value="P:detection of temperature stimulus"/>
    <property type="evidence" value="ECO:0000316"/>
    <property type="project" value="TAIR"/>
</dbReference>
<dbReference type="GO" id="GO:0045892">
    <property type="term" value="P:negative regulation of DNA-templated transcription"/>
    <property type="evidence" value="ECO:0000314"/>
    <property type="project" value="TAIR"/>
</dbReference>
<dbReference type="GO" id="GO:0010468">
    <property type="term" value="P:regulation of gene expression"/>
    <property type="evidence" value="ECO:0000316"/>
    <property type="project" value="TAIR"/>
</dbReference>
<dbReference type="GO" id="GO:0006970">
    <property type="term" value="P:response to osmotic stress"/>
    <property type="evidence" value="ECO:0000314"/>
    <property type="project" value="TAIR"/>
</dbReference>
<dbReference type="CDD" id="cd00074">
    <property type="entry name" value="HFD_H2A"/>
    <property type="match status" value="1"/>
</dbReference>
<dbReference type="FunFam" id="1.10.20.10:FF:000005">
    <property type="entry name" value="Histone H2A"/>
    <property type="match status" value="1"/>
</dbReference>
<dbReference type="Gene3D" id="1.10.20.10">
    <property type="entry name" value="Histone, subunit A"/>
    <property type="match status" value="1"/>
</dbReference>
<dbReference type="InterPro" id="IPR009072">
    <property type="entry name" value="Histone-fold"/>
</dbReference>
<dbReference type="InterPro" id="IPR002119">
    <property type="entry name" value="Histone_H2A"/>
</dbReference>
<dbReference type="InterPro" id="IPR007125">
    <property type="entry name" value="Histone_H2A/H2B/H3"/>
</dbReference>
<dbReference type="InterPro" id="IPR032454">
    <property type="entry name" value="Histone_H2A_C"/>
</dbReference>
<dbReference type="PANTHER" id="PTHR23430">
    <property type="entry name" value="HISTONE H2A"/>
    <property type="match status" value="1"/>
</dbReference>
<dbReference type="Pfam" id="PF00125">
    <property type="entry name" value="Histone"/>
    <property type="match status" value="1"/>
</dbReference>
<dbReference type="Pfam" id="PF16211">
    <property type="entry name" value="Histone_H2A_C"/>
    <property type="match status" value="1"/>
</dbReference>
<dbReference type="PRINTS" id="PR00620">
    <property type="entry name" value="HISTONEH2A"/>
</dbReference>
<dbReference type="SMART" id="SM00414">
    <property type="entry name" value="H2A"/>
    <property type="match status" value="1"/>
</dbReference>
<dbReference type="SUPFAM" id="SSF47113">
    <property type="entry name" value="Histone-fold"/>
    <property type="match status" value="1"/>
</dbReference>
<protein>
    <recommendedName>
        <fullName>Histone H2A variant 1</fullName>
    </recommendedName>
    <alternativeName>
        <fullName>H2A.F/Z 1</fullName>
    </alternativeName>
    <alternativeName>
        <fullName>H2AvAt</fullName>
    </alternativeName>
    <alternativeName>
        <fullName>HTA11</fullName>
    </alternativeName>
</protein>
<name>H2AV1_ARATH</name>
<proteinExistence type="evidence at protein level"/>
<keyword id="KW-0158">Chromosome</keyword>
<keyword id="KW-0238">DNA-binding</keyword>
<keyword id="KW-0544">Nucleosome core</keyword>
<keyword id="KW-0539">Nucleus</keyword>
<keyword id="KW-1185">Reference proteome</keyword>
<organism>
    <name type="scientific">Arabidopsis thaliana</name>
    <name type="common">Mouse-ear cress</name>
    <dbReference type="NCBI Taxonomy" id="3702"/>
    <lineage>
        <taxon>Eukaryota</taxon>
        <taxon>Viridiplantae</taxon>
        <taxon>Streptophyta</taxon>
        <taxon>Embryophyta</taxon>
        <taxon>Tracheophyta</taxon>
        <taxon>Spermatophyta</taxon>
        <taxon>Magnoliopsida</taxon>
        <taxon>eudicotyledons</taxon>
        <taxon>Gunneridae</taxon>
        <taxon>Pentapetalae</taxon>
        <taxon>rosids</taxon>
        <taxon>malvids</taxon>
        <taxon>Brassicales</taxon>
        <taxon>Brassicaceae</taxon>
        <taxon>Camelineae</taxon>
        <taxon>Arabidopsis</taxon>
    </lineage>
</organism>
<accession>O23628</accession>
<feature type="chain" id="PRO_0000055312" description="Histone H2A variant 1">
    <location>
        <begin position="1"/>
        <end position="136"/>
    </location>
</feature>
<feature type="region of interest" description="Disordered" evidence="2">
    <location>
        <begin position="1"/>
        <end position="35"/>
    </location>
</feature>
<feature type="compositionally biased region" description="Basic and acidic residues" evidence="2">
    <location>
        <begin position="18"/>
        <end position="27"/>
    </location>
</feature>